<organism>
    <name type="scientific">Dinoroseobacter shibae (strain DSM 16493 / NCIMB 14021 / DFL 12)</name>
    <dbReference type="NCBI Taxonomy" id="398580"/>
    <lineage>
        <taxon>Bacteria</taxon>
        <taxon>Pseudomonadati</taxon>
        <taxon>Pseudomonadota</taxon>
        <taxon>Alphaproteobacteria</taxon>
        <taxon>Rhodobacterales</taxon>
        <taxon>Roseobacteraceae</taxon>
        <taxon>Dinoroseobacter</taxon>
    </lineage>
</organism>
<protein>
    <recommendedName>
        <fullName evidence="1">Large ribosomal subunit protein uL3</fullName>
    </recommendedName>
    <alternativeName>
        <fullName evidence="2">50S ribosomal protein L3</fullName>
    </alternativeName>
</protein>
<name>RL3_DINSH</name>
<proteinExistence type="inferred from homology"/>
<feature type="chain" id="PRO_1000141858" description="Large ribosomal subunit protein uL3">
    <location>
        <begin position="1"/>
        <end position="279"/>
    </location>
</feature>
<feature type="modified residue" description="N5-methylglutamine" evidence="1">
    <location>
        <position position="151"/>
    </location>
</feature>
<evidence type="ECO:0000255" key="1">
    <source>
        <dbReference type="HAMAP-Rule" id="MF_01325"/>
    </source>
</evidence>
<evidence type="ECO:0000305" key="2"/>
<sequence length="279" mass="29311">MRSGVIAKKVGMTRLFMEDGKQVPVTVLQLDKLQVVAQRTAEKDGYSAVQLGAGTAKAKRTTKAMRGHFAAASVEPKRKVAEFRVAPENLINVGEEITADHYFEGQYVDVSGTSIGKGFAGAMKRHNFGGLRASHGVSISHRSHGSTGQCQDPGKVFKGKKMAGHMGAARVTTQNLQVVRTDADRGLIMIKGAVPGSKGGWVTIKDAVKKPVPENVILPAALKSAAEEAKRLAEEAAAAAEAEAKAAEEAAAAEAAAAEEAALKQAEAQIEAEKKEGDE</sequence>
<keyword id="KW-0488">Methylation</keyword>
<keyword id="KW-1185">Reference proteome</keyword>
<keyword id="KW-0687">Ribonucleoprotein</keyword>
<keyword id="KW-0689">Ribosomal protein</keyword>
<keyword id="KW-0694">RNA-binding</keyword>
<keyword id="KW-0699">rRNA-binding</keyword>
<dbReference type="EMBL" id="CP000830">
    <property type="protein sequence ID" value="ABV92025.1"/>
    <property type="molecule type" value="Genomic_DNA"/>
</dbReference>
<dbReference type="RefSeq" id="WP_012176956.1">
    <property type="nucleotide sequence ID" value="NC_009952.1"/>
</dbReference>
<dbReference type="SMR" id="A8LM48"/>
<dbReference type="STRING" id="398580.Dshi_0276"/>
<dbReference type="KEGG" id="dsh:Dshi_0276"/>
<dbReference type="eggNOG" id="COG0087">
    <property type="taxonomic scope" value="Bacteria"/>
</dbReference>
<dbReference type="HOGENOM" id="CLU_044142_2_0_5"/>
<dbReference type="OrthoDB" id="9806135at2"/>
<dbReference type="Proteomes" id="UP000006833">
    <property type="component" value="Chromosome"/>
</dbReference>
<dbReference type="GO" id="GO:0022625">
    <property type="term" value="C:cytosolic large ribosomal subunit"/>
    <property type="evidence" value="ECO:0007669"/>
    <property type="project" value="TreeGrafter"/>
</dbReference>
<dbReference type="GO" id="GO:0019843">
    <property type="term" value="F:rRNA binding"/>
    <property type="evidence" value="ECO:0007669"/>
    <property type="project" value="UniProtKB-UniRule"/>
</dbReference>
<dbReference type="GO" id="GO:0003735">
    <property type="term" value="F:structural constituent of ribosome"/>
    <property type="evidence" value="ECO:0007669"/>
    <property type="project" value="InterPro"/>
</dbReference>
<dbReference type="GO" id="GO:0006412">
    <property type="term" value="P:translation"/>
    <property type="evidence" value="ECO:0007669"/>
    <property type="project" value="UniProtKB-UniRule"/>
</dbReference>
<dbReference type="FunFam" id="2.40.30.10:FF:000004">
    <property type="entry name" value="50S ribosomal protein L3"/>
    <property type="match status" value="1"/>
</dbReference>
<dbReference type="FunFam" id="3.30.160.810:FF:000001">
    <property type="entry name" value="50S ribosomal protein L3"/>
    <property type="match status" value="1"/>
</dbReference>
<dbReference type="Gene3D" id="3.30.160.810">
    <property type="match status" value="1"/>
</dbReference>
<dbReference type="Gene3D" id="2.40.30.10">
    <property type="entry name" value="Translation factors"/>
    <property type="match status" value="1"/>
</dbReference>
<dbReference type="HAMAP" id="MF_01325_B">
    <property type="entry name" value="Ribosomal_uL3_B"/>
    <property type="match status" value="1"/>
</dbReference>
<dbReference type="InterPro" id="IPR000597">
    <property type="entry name" value="Ribosomal_uL3"/>
</dbReference>
<dbReference type="InterPro" id="IPR019927">
    <property type="entry name" value="Ribosomal_uL3_bac/org-type"/>
</dbReference>
<dbReference type="InterPro" id="IPR009000">
    <property type="entry name" value="Transl_B-barrel_sf"/>
</dbReference>
<dbReference type="NCBIfam" id="TIGR03625">
    <property type="entry name" value="L3_bact"/>
    <property type="match status" value="1"/>
</dbReference>
<dbReference type="PANTHER" id="PTHR11229">
    <property type="entry name" value="50S RIBOSOMAL PROTEIN L3"/>
    <property type="match status" value="1"/>
</dbReference>
<dbReference type="PANTHER" id="PTHR11229:SF16">
    <property type="entry name" value="LARGE RIBOSOMAL SUBUNIT PROTEIN UL3C"/>
    <property type="match status" value="1"/>
</dbReference>
<dbReference type="Pfam" id="PF00297">
    <property type="entry name" value="Ribosomal_L3"/>
    <property type="match status" value="1"/>
</dbReference>
<dbReference type="SUPFAM" id="SSF50447">
    <property type="entry name" value="Translation proteins"/>
    <property type="match status" value="1"/>
</dbReference>
<accession>A8LM48</accession>
<comment type="function">
    <text evidence="1">One of the primary rRNA binding proteins, it binds directly near the 3'-end of the 23S rRNA, where it nucleates assembly of the 50S subunit.</text>
</comment>
<comment type="subunit">
    <text evidence="1">Part of the 50S ribosomal subunit. Forms a cluster with proteins L14 and L19.</text>
</comment>
<comment type="PTM">
    <text evidence="1">Methylated by PrmB.</text>
</comment>
<comment type="similarity">
    <text evidence="1">Belongs to the universal ribosomal protein uL3 family.</text>
</comment>
<reference key="1">
    <citation type="journal article" date="2010" name="ISME J.">
        <title>The complete genome sequence of the algal symbiont Dinoroseobacter shibae: a hitchhiker's guide to life in the sea.</title>
        <authorList>
            <person name="Wagner-Dobler I."/>
            <person name="Ballhausen B."/>
            <person name="Berger M."/>
            <person name="Brinkhoff T."/>
            <person name="Buchholz I."/>
            <person name="Bunk B."/>
            <person name="Cypionka H."/>
            <person name="Daniel R."/>
            <person name="Drepper T."/>
            <person name="Gerdts G."/>
            <person name="Hahnke S."/>
            <person name="Han C."/>
            <person name="Jahn D."/>
            <person name="Kalhoefer D."/>
            <person name="Kiss H."/>
            <person name="Klenk H.P."/>
            <person name="Kyrpides N."/>
            <person name="Liebl W."/>
            <person name="Liesegang H."/>
            <person name="Meincke L."/>
            <person name="Pati A."/>
            <person name="Petersen J."/>
            <person name="Piekarski T."/>
            <person name="Pommerenke C."/>
            <person name="Pradella S."/>
            <person name="Pukall R."/>
            <person name="Rabus R."/>
            <person name="Stackebrandt E."/>
            <person name="Thole S."/>
            <person name="Thompson L."/>
            <person name="Tielen P."/>
            <person name="Tomasch J."/>
            <person name="von Jan M."/>
            <person name="Wanphrut N."/>
            <person name="Wichels A."/>
            <person name="Zech H."/>
            <person name="Simon M."/>
        </authorList>
    </citation>
    <scope>NUCLEOTIDE SEQUENCE [LARGE SCALE GENOMIC DNA]</scope>
    <source>
        <strain>DSM 16493 / NCIMB 14021 / DFL 12</strain>
    </source>
</reference>
<gene>
    <name evidence="1" type="primary">rplC</name>
    <name type="ordered locus">Dshi_0276</name>
</gene>